<dbReference type="EC" id="1.2.1.70" evidence="1"/>
<dbReference type="EMBL" id="CP000493">
    <property type="protein sequence ID" value="ABM80078.1"/>
    <property type="molecule type" value="Genomic_DNA"/>
</dbReference>
<dbReference type="RefSeq" id="WP_011821395.1">
    <property type="nucleotide sequence ID" value="NC_008818.1"/>
</dbReference>
<dbReference type="SMR" id="A2BJB7"/>
<dbReference type="STRING" id="415426.Hbut_0206"/>
<dbReference type="EnsemblBacteria" id="ABM80078">
    <property type="protein sequence ID" value="ABM80078"/>
    <property type="gene ID" value="Hbut_0206"/>
</dbReference>
<dbReference type="GeneID" id="4782332"/>
<dbReference type="KEGG" id="hbu:Hbut_0206"/>
<dbReference type="eggNOG" id="arCOG01036">
    <property type="taxonomic scope" value="Archaea"/>
</dbReference>
<dbReference type="HOGENOM" id="CLU_035113_0_0_2"/>
<dbReference type="OrthoDB" id="4562at2157"/>
<dbReference type="UniPathway" id="UPA00251">
    <property type="reaction ID" value="UER00316"/>
</dbReference>
<dbReference type="Proteomes" id="UP000002593">
    <property type="component" value="Chromosome"/>
</dbReference>
<dbReference type="GO" id="GO:0008883">
    <property type="term" value="F:glutamyl-tRNA reductase activity"/>
    <property type="evidence" value="ECO:0007669"/>
    <property type="project" value="UniProtKB-UniRule"/>
</dbReference>
<dbReference type="GO" id="GO:0050661">
    <property type="term" value="F:NADP binding"/>
    <property type="evidence" value="ECO:0007669"/>
    <property type="project" value="InterPro"/>
</dbReference>
<dbReference type="GO" id="GO:0019353">
    <property type="term" value="P:protoporphyrinogen IX biosynthetic process from glutamate"/>
    <property type="evidence" value="ECO:0007669"/>
    <property type="project" value="TreeGrafter"/>
</dbReference>
<dbReference type="Gene3D" id="3.30.460.30">
    <property type="entry name" value="Glutamyl-tRNA reductase, N-terminal domain"/>
    <property type="match status" value="1"/>
</dbReference>
<dbReference type="Gene3D" id="3.40.50.720">
    <property type="entry name" value="NAD(P)-binding Rossmann-like Domain"/>
    <property type="match status" value="1"/>
</dbReference>
<dbReference type="HAMAP" id="MF_00087">
    <property type="entry name" value="Glu_tRNA_reductase"/>
    <property type="match status" value="1"/>
</dbReference>
<dbReference type="InterPro" id="IPR000343">
    <property type="entry name" value="4pyrrol_synth_GluRdtase"/>
</dbReference>
<dbReference type="InterPro" id="IPR015896">
    <property type="entry name" value="4pyrrol_synth_GluRdtase_dimer"/>
</dbReference>
<dbReference type="InterPro" id="IPR015895">
    <property type="entry name" value="4pyrrol_synth_GluRdtase_N"/>
</dbReference>
<dbReference type="InterPro" id="IPR036453">
    <property type="entry name" value="GluRdtase_dimer_dom_sf"/>
</dbReference>
<dbReference type="InterPro" id="IPR036343">
    <property type="entry name" value="GluRdtase_N_sf"/>
</dbReference>
<dbReference type="InterPro" id="IPR036291">
    <property type="entry name" value="NAD(P)-bd_dom_sf"/>
</dbReference>
<dbReference type="InterPro" id="IPR006151">
    <property type="entry name" value="Shikm_DH/Glu-tRNA_Rdtase"/>
</dbReference>
<dbReference type="NCBIfam" id="TIGR01035">
    <property type="entry name" value="hemA"/>
    <property type="match status" value="1"/>
</dbReference>
<dbReference type="PANTHER" id="PTHR43013">
    <property type="entry name" value="GLUTAMYL-TRNA REDUCTASE"/>
    <property type="match status" value="1"/>
</dbReference>
<dbReference type="PANTHER" id="PTHR43013:SF1">
    <property type="entry name" value="GLUTAMYL-TRNA REDUCTASE"/>
    <property type="match status" value="1"/>
</dbReference>
<dbReference type="Pfam" id="PF00745">
    <property type="entry name" value="GlutR_dimer"/>
    <property type="match status" value="1"/>
</dbReference>
<dbReference type="Pfam" id="PF05201">
    <property type="entry name" value="GlutR_N"/>
    <property type="match status" value="1"/>
</dbReference>
<dbReference type="Pfam" id="PF01488">
    <property type="entry name" value="Shikimate_DH"/>
    <property type="match status" value="1"/>
</dbReference>
<dbReference type="PIRSF" id="PIRSF000445">
    <property type="entry name" value="4pyrrol_synth_GluRdtase"/>
    <property type="match status" value="1"/>
</dbReference>
<dbReference type="SUPFAM" id="SSF69742">
    <property type="entry name" value="Glutamyl tRNA-reductase catalytic, N-terminal domain"/>
    <property type="match status" value="1"/>
</dbReference>
<dbReference type="SUPFAM" id="SSF69075">
    <property type="entry name" value="Glutamyl tRNA-reductase dimerization domain"/>
    <property type="match status" value="1"/>
</dbReference>
<dbReference type="SUPFAM" id="SSF51735">
    <property type="entry name" value="NAD(P)-binding Rossmann-fold domains"/>
    <property type="match status" value="1"/>
</dbReference>
<sequence length="411" mass="45007">MPRLLEELTAVILTHRDAPLDVVGSFESRVGEAYQILRGVVDEAVVLATCNRFEVYALPRRGFVETVIGFLGEASRYARILHGMDVVRHLFRVAAGLESAIIGENEILGQVARAYEEARRRGVAGKYLGLLFSQAVRTGKLVRSRTRISYGNVGAPGAAVKLAREAAGGFDGKHVVVVGAGEAGSIMASLVREEAPTARISIVNRSVDRARELAGKVRGEAYGLDMLPKLLAAADVVLVAVTVNEPVIKRSMLEDVGRHLVVVDISNPPAVEQPIPSNVYYAGLRDVEKVIKEVLAVRIREVPKAEAIVEEQVALLRKLWLKRGADEAIAEIMRYANRVMEEEVEELVSRLRGLGVDGAALLVARSFAYSLTKKLLRPLILYAHEAALEGSLSKLEEIAQKYRDELARRQH</sequence>
<evidence type="ECO:0000255" key="1">
    <source>
        <dbReference type="HAMAP-Rule" id="MF_00087"/>
    </source>
</evidence>
<feature type="chain" id="PRO_0000335089" description="Glutamyl-tRNA reductase">
    <location>
        <begin position="1"/>
        <end position="411"/>
    </location>
</feature>
<feature type="active site" description="Nucleophile" evidence="1">
    <location>
        <position position="50"/>
    </location>
</feature>
<feature type="binding site" evidence="1">
    <location>
        <begin position="49"/>
        <end position="52"/>
    </location>
    <ligand>
        <name>substrate</name>
    </ligand>
</feature>
<feature type="binding site" evidence="1">
    <location>
        <position position="99"/>
    </location>
    <ligand>
        <name>substrate</name>
    </ligand>
</feature>
<feature type="binding site" evidence="1">
    <location>
        <begin position="104"/>
        <end position="106"/>
    </location>
    <ligand>
        <name>substrate</name>
    </ligand>
</feature>
<feature type="binding site" evidence="1">
    <location>
        <position position="110"/>
    </location>
    <ligand>
        <name>substrate</name>
    </ligand>
</feature>
<feature type="binding site" evidence="1">
    <location>
        <begin position="179"/>
        <end position="184"/>
    </location>
    <ligand>
        <name>NADP(+)</name>
        <dbReference type="ChEBI" id="CHEBI:58349"/>
    </ligand>
</feature>
<feature type="site" description="Important for activity" evidence="1">
    <location>
        <position position="89"/>
    </location>
</feature>
<comment type="function">
    <text evidence="1">Catalyzes the NADPH-dependent reduction of glutamyl-tRNA(Glu) to glutamate 1-semialdehyde (GSA).</text>
</comment>
<comment type="catalytic activity">
    <reaction evidence="1">
        <text>(S)-4-amino-5-oxopentanoate + tRNA(Glu) + NADP(+) = L-glutamyl-tRNA(Glu) + NADPH + H(+)</text>
        <dbReference type="Rhea" id="RHEA:12344"/>
        <dbReference type="Rhea" id="RHEA-COMP:9663"/>
        <dbReference type="Rhea" id="RHEA-COMP:9680"/>
        <dbReference type="ChEBI" id="CHEBI:15378"/>
        <dbReference type="ChEBI" id="CHEBI:57501"/>
        <dbReference type="ChEBI" id="CHEBI:57783"/>
        <dbReference type="ChEBI" id="CHEBI:58349"/>
        <dbReference type="ChEBI" id="CHEBI:78442"/>
        <dbReference type="ChEBI" id="CHEBI:78520"/>
        <dbReference type="EC" id="1.2.1.70"/>
    </reaction>
</comment>
<comment type="pathway">
    <text evidence="1">Porphyrin-containing compound metabolism; protoporphyrin-IX biosynthesis; 5-aminolevulinate from L-glutamyl-tRNA(Glu): step 1/2.</text>
</comment>
<comment type="subunit">
    <text evidence="1">Homodimer.</text>
</comment>
<comment type="domain">
    <text evidence="1">Possesses an unusual extended V-shaped dimeric structure with each monomer consisting of three distinct domains arranged along a curved 'spinal' alpha-helix. The N-terminal catalytic domain specifically recognizes the glutamate moiety of the substrate. The second domain is the NADPH-binding domain, and the third C-terminal domain is responsible for dimerization.</text>
</comment>
<comment type="miscellaneous">
    <text evidence="1">During catalysis, the active site Cys acts as a nucleophile attacking the alpha-carbonyl group of tRNA-bound glutamate with the formation of a thioester intermediate between enzyme and glutamate, and the concomitant release of tRNA(Glu). The thioester intermediate is finally reduced by direct hydride transfer from NADPH, to form the product GSA.</text>
</comment>
<comment type="similarity">
    <text evidence="1">Belongs to the glutamyl-tRNA reductase family.</text>
</comment>
<organism>
    <name type="scientific">Hyperthermus butylicus (strain DSM 5456 / JCM 9403 / PLM1-5)</name>
    <dbReference type="NCBI Taxonomy" id="415426"/>
    <lineage>
        <taxon>Archaea</taxon>
        <taxon>Thermoproteota</taxon>
        <taxon>Thermoprotei</taxon>
        <taxon>Desulfurococcales</taxon>
        <taxon>Pyrodictiaceae</taxon>
        <taxon>Hyperthermus</taxon>
    </lineage>
</organism>
<accession>A2BJB7</accession>
<name>HEM1_HYPBU</name>
<protein>
    <recommendedName>
        <fullName evidence="1">Glutamyl-tRNA reductase</fullName>
        <shortName evidence="1">GluTR</shortName>
        <ecNumber evidence="1">1.2.1.70</ecNumber>
    </recommendedName>
</protein>
<keyword id="KW-0521">NADP</keyword>
<keyword id="KW-0560">Oxidoreductase</keyword>
<keyword id="KW-0627">Porphyrin biosynthesis</keyword>
<keyword id="KW-1185">Reference proteome</keyword>
<gene>
    <name evidence="1" type="primary">hemA</name>
    <name type="ordered locus">Hbut_0206</name>
</gene>
<proteinExistence type="inferred from homology"/>
<reference key="1">
    <citation type="journal article" date="2007" name="Archaea">
        <title>The genome of Hyperthermus butylicus: a sulfur-reducing, peptide fermenting, neutrophilic Crenarchaeote growing up to 108 degrees C.</title>
        <authorList>
            <person name="Bruegger K."/>
            <person name="Chen L."/>
            <person name="Stark M."/>
            <person name="Zibat A."/>
            <person name="Redder P."/>
            <person name="Ruepp A."/>
            <person name="Awayez M."/>
            <person name="She Q."/>
            <person name="Garrett R.A."/>
            <person name="Klenk H.-P."/>
        </authorList>
    </citation>
    <scope>NUCLEOTIDE SEQUENCE [LARGE SCALE GENOMIC DNA]</scope>
    <source>
        <strain>DSM 5456 / JCM 9403 / PLM1-5</strain>
    </source>
</reference>